<gene>
    <name evidence="1" type="primary">hemL</name>
    <name type="ordered locus">VV2728</name>
</gene>
<keyword id="KW-0963">Cytoplasm</keyword>
<keyword id="KW-0413">Isomerase</keyword>
<keyword id="KW-0627">Porphyrin biosynthesis</keyword>
<keyword id="KW-0663">Pyridoxal phosphate</keyword>
<comment type="catalytic activity">
    <reaction evidence="1">
        <text>(S)-4-amino-5-oxopentanoate = 5-aminolevulinate</text>
        <dbReference type="Rhea" id="RHEA:14265"/>
        <dbReference type="ChEBI" id="CHEBI:57501"/>
        <dbReference type="ChEBI" id="CHEBI:356416"/>
        <dbReference type="EC" id="5.4.3.8"/>
    </reaction>
</comment>
<comment type="cofactor">
    <cofactor evidence="1">
        <name>pyridoxal 5'-phosphate</name>
        <dbReference type="ChEBI" id="CHEBI:597326"/>
    </cofactor>
</comment>
<comment type="pathway">
    <text evidence="1">Porphyrin-containing compound metabolism; protoporphyrin-IX biosynthesis; 5-aminolevulinate from L-glutamyl-tRNA(Glu): step 2/2.</text>
</comment>
<comment type="subunit">
    <text evidence="1">Homodimer.</text>
</comment>
<comment type="subcellular location">
    <subcellularLocation>
        <location evidence="1">Cytoplasm</location>
    </subcellularLocation>
</comment>
<comment type="similarity">
    <text evidence="1">Belongs to the class-III pyridoxal-phosphate-dependent aminotransferase family. HemL subfamily.</text>
</comment>
<comment type="sequence caution" evidence="2">
    <conflict type="erroneous initiation">
        <sequence resource="EMBL-CDS" id="BAC95492"/>
    </conflict>
</comment>
<proteinExistence type="inferred from homology"/>
<sequence length="431" mass="46067">MTKSAELYQKAQQTIPGGVNSPVRAFNGVGGSPIFVERADGAFIFDADGKAYIDYVGSWGPMILGHNHAVIREAVIEAAQRGLSFGAPTEMEIKMAELVSELVPSMEQLRMVSSGTEATMSAIRLARGFTGRDKILKFEGCYHGHADSLLVKAGSGALTLGQPSSPGVPADFAKHTLTATFNDLDSVRELFAANKGEIACIIVEPVAGNMNCIPPVEGFHEGLREICDQEGALLIFDEVMTGFRVALGGAQAHYNIKPDLTTLGKVIGGGMPVGAFGGRKEVMQYIAPTGPVYQAGTLSGNPVAMAAGYACLTLLREEGNEKRLASKTKHLADGFKSLAAQHGIPLVVNQVGGMFGFFFTEQEQITCYEDVTKCDLERFKRFFHLMIDHGVYLAPSAFEASFTSLAHGSKEIEATLEAADRCFAILAAESK</sequence>
<feature type="chain" id="PRO_0000120467" description="Glutamate-1-semialdehyde 2,1-aminomutase">
    <location>
        <begin position="1"/>
        <end position="431"/>
    </location>
</feature>
<feature type="modified residue" description="N6-(pyridoxal phosphate)lysine" evidence="1">
    <location>
        <position position="265"/>
    </location>
</feature>
<organism>
    <name type="scientific">Vibrio vulnificus (strain YJ016)</name>
    <dbReference type="NCBI Taxonomy" id="196600"/>
    <lineage>
        <taxon>Bacteria</taxon>
        <taxon>Pseudomonadati</taxon>
        <taxon>Pseudomonadota</taxon>
        <taxon>Gammaproteobacteria</taxon>
        <taxon>Vibrionales</taxon>
        <taxon>Vibrionaceae</taxon>
        <taxon>Vibrio</taxon>
    </lineage>
</organism>
<name>GSA_VIBVY</name>
<evidence type="ECO:0000255" key="1">
    <source>
        <dbReference type="HAMAP-Rule" id="MF_00375"/>
    </source>
</evidence>
<evidence type="ECO:0000305" key="2"/>
<protein>
    <recommendedName>
        <fullName evidence="1">Glutamate-1-semialdehyde 2,1-aminomutase</fullName>
        <shortName evidence="1">GSA</shortName>
        <ecNumber evidence="1">5.4.3.8</ecNumber>
    </recommendedName>
    <alternativeName>
        <fullName evidence="1">Glutamate-1-semialdehyde aminotransferase</fullName>
        <shortName evidence="1">GSA-AT</shortName>
    </alternativeName>
</protein>
<dbReference type="EC" id="5.4.3.8" evidence="1"/>
<dbReference type="EMBL" id="BA000037">
    <property type="protein sequence ID" value="BAC95492.1"/>
    <property type="status" value="ALT_INIT"/>
    <property type="molecule type" value="Genomic_DNA"/>
</dbReference>
<dbReference type="RefSeq" id="WP_011151092.1">
    <property type="nucleotide sequence ID" value="NC_005139.1"/>
</dbReference>
<dbReference type="SMR" id="Q7MHY9"/>
<dbReference type="STRING" id="672.VV93_v1c24430"/>
<dbReference type="KEGG" id="vvy:VV2728"/>
<dbReference type="PATRIC" id="fig|196600.6.peg.2723"/>
<dbReference type="eggNOG" id="COG0001">
    <property type="taxonomic scope" value="Bacteria"/>
</dbReference>
<dbReference type="HOGENOM" id="CLU_016922_1_5_6"/>
<dbReference type="UniPathway" id="UPA00251">
    <property type="reaction ID" value="UER00317"/>
</dbReference>
<dbReference type="Proteomes" id="UP000002675">
    <property type="component" value="Chromosome I"/>
</dbReference>
<dbReference type="GO" id="GO:0005737">
    <property type="term" value="C:cytoplasm"/>
    <property type="evidence" value="ECO:0007669"/>
    <property type="project" value="UniProtKB-SubCell"/>
</dbReference>
<dbReference type="GO" id="GO:0042286">
    <property type="term" value="F:glutamate-1-semialdehyde 2,1-aminomutase activity"/>
    <property type="evidence" value="ECO:0007669"/>
    <property type="project" value="UniProtKB-UniRule"/>
</dbReference>
<dbReference type="GO" id="GO:0030170">
    <property type="term" value="F:pyridoxal phosphate binding"/>
    <property type="evidence" value="ECO:0007669"/>
    <property type="project" value="InterPro"/>
</dbReference>
<dbReference type="GO" id="GO:0008483">
    <property type="term" value="F:transaminase activity"/>
    <property type="evidence" value="ECO:0007669"/>
    <property type="project" value="InterPro"/>
</dbReference>
<dbReference type="GO" id="GO:0006782">
    <property type="term" value="P:protoporphyrinogen IX biosynthetic process"/>
    <property type="evidence" value="ECO:0007669"/>
    <property type="project" value="UniProtKB-UniRule"/>
</dbReference>
<dbReference type="CDD" id="cd00610">
    <property type="entry name" value="OAT_like"/>
    <property type="match status" value="1"/>
</dbReference>
<dbReference type="FunFam" id="3.40.640.10:FF:000021">
    <property type="entry name" value="Glutamate-1-semialdehyde 2,1-aminomutase"/>
    <property type="match status" value="1"/>
</dbReference>
<dbReference type="FunFam" id="3.90.1150.10:FF:000012">
    <property type="entry name" value="Glutamate-1-semialdehyde 2,1-aminomutase"/>
    <property type="match status" value="1"/>
</dbReference>
<dbReference type="Gene3D" id="3.90.1150.10">
    <property type="entry name" value="Aspartate Aminotransferase, domain 1"/>
    <property type="match status" value="1"/>
</dbReference>
<dbReference type="Gene3D" id="3.40.640.10">
    <property type="entry name" value="Type I PLP-dependent aspartate aminotransferase-like (Major domain)"/>
    <property type="match status" value="1"/>
</dbReference>
<dbReference type="HAMAP" id="MF_00375">
    <property type="entry name" value="HemL_aminotrans_3"/>
    <property type="match status" value="1"/>
</dbReference>
<dbReference type="InterPro" id="IPR004639">
    <property type="entry name" value="4pyrrol_synth_GluAld_NH2Trfase"/>
</dbReference>
<dbReference type="InterPro" id="IPR005814">
    <property type="entry name" value="Aminotrans_3"/>
</dbReference>
<dbReference type="InterPro" id="IPR049704">
    <property type="entry name" value="Aminotrans_3_PPA_site"/>
</dbReference>
<dbReference type="InterPro" id="IPR015424">
    <property type="entry name" value="PyrdxlP-dep_Trfase"/>
</dbReference>
<dbReference type="InterPro" id="IPR015421">
    <property type="entry name" value="PyrdxlP-dep_Trfase_major"/>
</dbReference>
<dbReference type="InterPro" id="IPR015422">
    <property type="entry name" value="PyrdxlP-dep_Trfase_small"/>
</dbReference>
<dbReference type="NCBIfam" id="TIGR00713">
    <property type="entry name" value="hemL"/>
    <property type="match status" value="1"/>
</dbReference>
<dbReference type="NCBIfam" id="NF000818">
    <property type="entry name" value="PRK00062.1"/>
    <property type="match status" value="1"/>
</dbReference>
<dbReference type="PANTHER" id="PTHR43713">
    <property type="entry name" value="GLUTAMATE-1-SEMIALDEHYDE 2,1-AMINOMUTASE"/>
    <property type="match status" value="1"/>
</dbReference>
<dbReference type="PANTHER" id="PTHR43713:SF3">
    <property type="entry name" value="GLUTAMATE-1-SEMIALDEHYDE 2,1-AMINOMUTASE 1, CHLOROPLASTIC-RELATED"/>
    <property type="match status" value="1"/>
</dbReference>
<dbReference type="Pfam" id="PF00202">
    <property type="entry name" value="Aminotran_3"/>
    <property type="match status" value="1"/>
</dbReference>
<dbReference type="SUPFAM" id="SSF53383">
    <property type="entry name" value="PLP-dependent transferases"/>
    <property type="match status" value="1"/>
</dbReference>
<dbReference type="PROSITE" id="PS00600">
    <property type="entry name" value="AA_TRANSFER_CLASS_3"/>
    <property type="match status" value="1"/>
</dbReference>
<reference key="1">
    <citation type="journal article" date="2003" name="Genome Res.">
        <title>Comparative genome analysis of Vibrio vulnificus, a marine pathogen.</title>
        <authorList>
            <person name="Chen C.-Y."/>
            <person name="Wu K.-M."/>
            <person name="Chang Y.-C."/>
            <person name="Chang C.-H."/>
            <person name="Tsai H.-C."/>
            <person name="Liao T.-L."/>
            <person name="Liu Y.-M."/>
            <person name="Chen H.-J."/>
            <person name="Shen A.B.-T."/>
            <person name="Li J.-C."/>
            <person name="Su T.-L."/>
            <person name="Shao C.-P."/>
            <person name="Lee C.-T."/>
            <person name="Hor L.-I."/>
            <person name="Tsai S.-F."/>
        </authorList>
    </citation>
    <scope>NUCLEOTIDE SEQUENCE [LARGE SCALE GENOMIC DNA]</scope>
    <source>
        <strain>YJ016</strain>
    </source>
</reference>
<accession>Q7MHY9</accession>